<proteinExistence type="inferred from homology"/>
<keyword id="KW-0274">FAD</keyword>
<keyword id="KW-0285">Flavoprotein</keyword>
<keyword id="KW-0520">NAD</keyword>
<keyword id="KW-0560">Oxidoreductase</keyword>
<sequence length="560" mass="62384">MKESYDYIIIGGGSAGSVLGGRLSEDVSNNVLVLEAGRSDYPWDLLIQMPAALMYPAGNKLYDWIYETTPEPHMDGRKVGHARGKVLGGSSSINGMIYQRGNPMDYEKWAKPEGMESWDYAHCLPYFKRLETTFGSKKGDPYRGHHGPIKLRRGPADNPLFQAFFDAGVEAGYNKTPDVNGFRQEGFGPFDSQVHNGRRVSASRAYLHPAMKRKNLEVQTRAFVTKLNFEGNKVTGVTFKKNGKEHTESAKEVILSGGAINSPQLLQLSGIGDSEHLRSLGIEPRIHLPGVGENFEDHLEVYVQHACKQPVSMQPSLNKLKMPFIGLQWILGRKGAAASNHFEGGGFVRSNDDVDYPNLMFHFLPIAVRYDGTKAPAAHGYQVHVGPMYSNSRGHLKIKSKDPFEKPEFVFNYLSTEEDKREWVEAIKVARNILKQKALDPFNGGEISPGPEVQTDEEIIEWVKRDGETALHPSCSCRMGPASDEMSVVDPETFKVHGMENLRVVDASVMPRTTNGNIHSPVLMMAERASDIIRGKKPLDPQYIDFYRHGVHDKDAGTVK</sequence>
<gene>
    <name evidence="1" type="primary">betA</name>
    <name type="synonym">cudB</name>
</gene>
<organism>
    <name type="scientific">Staphylococcus xylosus</name>
    <dbReference type="NCBI Taxonomy" id="1288"/>
    <lineage>
        <taxon>Bacteria</taxon>
        <taxon>Bacillati</taxon>
        <taxon>Bacillota</taxon>
        <taxon>Bacilli</taxon>
        <taxon>Bacillales</taxon>
        <taxon>Staphylococcaceae</taxon>
        <taxon>Staphylococcus</taxon>
    </lineage>
</organism>
<dbReference type="EC" id="1.1.99.1" evidence="1"/>
<dbReference type="EC" id="1.2.1.8" evidence="1"/>
<dbReference type="EMBL" id="AF009415">
    <property type="protein sequence ID" value="AAD23901.1"/>
    <property type="molecule type" value="Genomic_DNA"/>
</dbReference>
<dbReference type="SMR" id="Q9X2M2"/>
<dbReference type="STRING" id="1288.AWC37_11060"/>
<dbReference type="eggNOG" id="COG2303">
    <property type="taxonomic scope" value="Bacteria"/>
</dbReference>
<dbReference type="UniPathway" id="UPA00529">
    <property type="reaction ID" value="UER00385"/>
</dbReference>
<dbReference type="GO" id="GO:0016020">
    <property type="term" value="C:membrane"/>
    <property type="evidence" value="ECO:0007669"/>
    <property type="project" value="TreeGrafter"/>
</dbReference>
<dbReference type="GO" id="GO:0008802">
    <property type="term" value="F:betaine-aldehyde dehydrogenase (NAD+) activity"/>
    <property type="evidence" value="ECO:0007669"/>
    <property type="project" value="UniProtKB-EC"/>
</dbReference>
<dbReference type="GO" id="GO:0008812">
    <property type="term" value="F:choline dehydrogenase activity"/>
    <property type="evidence" value="ECO:0007669"/>
    <property type="project" value="UniProtKB-UniRule"/>
</dbReference>
<dbReference type="GO" id="GO:0050660">
    <property type="term" value="F:flavin adenine dinucleotide binding"/>
    <property type="evidence" value="ECO:0007669"/>
    <property type="project" value="InterPro"/>
</dbReference>
<dbReference type="GO" id="GO:0019285">
    <property type="term" value="P:glycine betaine biosynthetic process from choline"/>
    <property type="evidence" value="ECO:0007669"/>
    <property type="project" value="UniProtKB-UniRule"/>
</dbReference>
<dbReference type="Gene3D" id="3.50.50.60">
    <property type="entry name" value="FAD/NAD(P)-binding domain"/>
    <property type="match status" value="1"/>
</dbReference>
<dbReference type="Gene3D" id="3.30.560.10">
    <property type="entry name" value="Glucose Oxidase, domain 3"/>
    <property type="match status" value="1"/>
</dbReference>
<dbReference type="HAMAP" id="MF_00750">
    <property type="entry name" value="Choline_dehydrogen"/>
    <property type="match status" value="1"/>
</dbReference>
<dbReference type="InterPro" id="IPR011533">
    <property type="entry name" value="BetA"/>
</dbReference>
<dbReference type="InterPro" id="IPR036188">
    <property type="entry name" value="FAD/NAD-bd_sf"/>
</dbReference>
<dbReference type="InterPro" id="IPR012132">
    <property type="entry name" value="GMC_OxRdtase"/>
</dbReference>
<dbReference type="InterPro" id="IPR000172">
    <property type="entry name" value="GMC_OxRdtase_N"/>
</dbReference>
<dbReference type="InterPro" id="IPR007867">
    <property type="entry name" value="GMC_OxRtase_C"/>
</dbReference>
<dbReference type="NCBIfam" id="TIGR01810">
    <property type="entry name" value="betA"/>
    <property type="match status" value="1"/>
</dbReference>
<dbReference type="NCBIfam" id="NF002550">
    <property type="entry name" value="PRK02106.1"/>
    <property type="match status" value="1"/>
</dbReference>
<dbReference type="PANTHER" id="PTHR11552:SF147">
    <property type="entry name" value="CHOLINE DEHYDROGENASE, MITOCHONDRIAL"/>
    <property type="match status" value="1"/>
</dbReference>
<dbReference type="PANTHER" id="PTHR11552">
    <property type="entry name" value="GLUCOSE-METHANOL-CHOLINE GMC OXIDOREDUCTASE"/>
    <property type="match status" value="1"/>
</dbReference>
<dbReference type="Pfam" id="PF05199">
    <property type="entry name" value="GMC_oxred_C"/>
    <property type="match status" value="1"/>
</dbReference>
<dbReference type="Pfam" id="PF00732">
    <property type="entry name" value="GMC_oxred_N"/>
    <property type="match status" value="1"/>
</dbReference>
<dbReference type="PIRSF" id="PIRSF000137">
    <property type="entry name" value="Alcohol_oxidase"/>
    <property type="match status" value="1"/>
</dbReference>
<dbReference type="SUPFAM" id="SSF54373">
    <property type="entry name" value="FAD-linked reductases, C-terminal domain"/>
    <property type="match status" value="1"/>
</dbReference>
<dbReference type="SUPFAM" id="SSF51905">
    <property type="entry name" value="FAD/NAD(P)-binding domain"/>
    <property type="match status" value="1"/>
</dbReference>
<dbReference type="PROSITE" id="PS00623">
    <property type="entry name" value="GMC_OXRED_1"/>
    <property type="match status" value="1"/>
</dbReference>
<dbReference type="PROSITE" id="PS00624">
    <property type="entry name" value="GMC_OXRED_2"/>
    <property type="match status" value="1"/>
</dbReference>
<comment type="function">
    <text evidence="1">Involved in the biosynthesis of the osmoprotectant glycine betaine. Catalyzes the oxidation of choline to betaine aldehyde and betaine aldehyde to glycine betaine at the same rate.</text>
</comment>
<comment type="catalytic activity">
    <reaction evidence="1">
        <text>choline + A = betaine aldehyde + AH2</text>
        <dbReference type="Rhea" id="RHEA:17433"/>
        <dbReference type="ChEBI" id="CHEBI:13193"/>
        <dbReference type="ChEBI" id="CHEBI:15354"/>
        <dbReference type="ChEBI" id="CHEBI:15710"/>
        <dbReference type="ChEBI" id="CHEBI:17499"/>
        <dbReference type="EC" id="1.1.99.1"/>
    </reaction>
</comment>
<comment type="catalytic activity">
    <reaction evidence="1">
        <text>betaine aldehyde + NAD(+) + H2O = glycine betaine + NADH + 2 H(+)</text>
        <dbReference type="Rhea" id="RHEA:15305"/>
        <dbReference type="ChEBI" id="CHEBI:15377"/>
        <dbReference type="ChEBI" id="CHEBI:15378"/>
        <dbReference type="ChEBI" id="CHEBI:15710"/>
        <dbReference type="ChEBI" id="CHEBI:17750"/>
        <dbReference type="ChEBI" id="CHEBI:57540"/>
        <dbReference type="ChEBI" id="CHEBI:57945"/>
        <dbReference type="EC" id="1.2.1.8"/>
    </reaction>
</comment>
<comment type="cofactor">
    <cofactor evidence="1">
        <name>FAD</name>
        <dbReference type="ChEBI" id="CHEBI:57692"/>
    </cofactor>
</comment>
<comment type="pathway">
    <text evidence="1">Amine and polyamine biosynthesis; betaine biosynthesis via choline pathway; betaine aldehyde from choline (cytochrome c reductase route): step 1/1.</text>
</comment>
<comment type="similarity">
    <text evidence="1">Belongs to the GMC oxidoreductase family.</text>
</comment>
<reference key="1">
    <citation type="journal article" date="1999" name="J. Bacteriol.">
        <title>The choline-converting pathway in Staphylococcus xylosus C2A: genetic and physiological characterization.</title>
        <authorList>
            <person name="Rosenstein R."/>
            <person name="Futter-Bryniok D."/>
            <person name="Gotz F."/>
        </authorList>
    </citation>
    <scope>NUCLEOTIDE SEQUENCE [GENOMIC DNA]</scope>
    <source>
        <strain>DSM 20267 / Isolate C2A</strain>
    </source>
</reference>
<accession>Q9X2M2</accession>
<name>BETA_STAXY</name>
<protein>
    <recommendedName>
        <fullName evidence="1">Oxygen-dependent choline dehydrogenase</fullName>
        <shortName evidence="1">CDH</shortName>
        <shortName evidence="1">CHD</shortName>
        <ecNumber evidence="1">1.1.99.1</ecNumber>
    </recommendedName>
    <alternativeName>
        <fullName evidence="1">Betaine aldehyde dehydrogenase</fullName>
        <shortName evidence="1">BADH</shortName>
        <ecNumber evidence="1">1.2.1.8</ecNumber>
    </alternativeName>
</protein>
<feature type="chain" id="PRO_0000205605" description="Oxygen-dependent choline dehydrogenase">
    <location>
        <begin position="1"/>
        <end position="560"/>
    </location>
</feature>
<feature type="active site" description="Proton acceptor" evidence="1">
    <location>
        <position position="472"/>
    </location>
</feature>
<feature type="binding site" evidence="1">
    <location>
        <begin position="6"/>
        <end position="35"/>
    </location>
    <ligand>
        <name>FAD</name>
        <dbReference type="ChEBI" id="CHEBI:57692"/>
    </ligand>
</feature>
<evidence type="ECO:0000255" key="1">
    <source>
        <dbReference type="HAMAP-Rule" id="MF_00750"/>
    </source>
</evidence>